<comment type="function">
    <text evidence="1">Component of the sulfite reductase complex that catalyzes the 6-electron reduction of sulfite to sulfide. This is one of several activities required for the biosynthesis of L-cysteine from sulfate.</text>
</comment>
<comment type="catalytic activity">
    <reaction evidence="1">
        <text>hydrogen sulfide + 3 NADP(+) + 3 H2O = sulfite + 3 NADPH + 4 H(+)</text>
        <dbReference type="Rhea" id="RHEA:13801"/>
        <dbReference type="ChEBI" id="CHEBI:15377"/>
        <dbReference type="ChEBI" id="CHEBI:15378"/>
        <dbReference type="ChEBI" id="CHEBI:17359"/>
        <dbReference type="ChEBI" id="CHEBI:29919"/>
        <dbReference type="ChEBI" id="CHEBI:57783"/>
        <dbReference type="ChEBI" id="CHEBI:58349"/>
        <dbReference type="EC" id="1.8.1.2"/>
    </reaction>
</comment>
<comment type="cofactor">
    <cofactor evidence="1">
        <name>siroheme</name>
        <dbReference type="ChEBI" id="CHEBI:60052"/>
    </cofactor>
    <text evidence="1">Binds 1 siroheme per subunit.</text>
</comment>
<comment type="cofactor">
    <cofactor evidence="1">
        <name>[4Fe-4S] cluster</name>
        <dbReference type="ChEBI" id="CHEBI:49883"/>
    </cofactor>
    <text evidence="1">Binds 1 [4Fe-4S] cluster per subunit.</text>
</comment>
<comment type="pathway">
    <text evidence="1">Sulfur metabolism; hydrogen sulfide biosynthesis; hydrogen sulfide from sulfite (NADPH route): step 1/1.</text>
</comment>
<comment type="subunit">
    <text evidence="1">Alpha(8)-beta(8). The alpha component is a flavoprotein, the beta component is a hemoprotein.</text>
</comment>
<comment type="similarity">
    <text evidence="1">Belongs to the nitrite and sulfite reductase 4Fe-4S domain family.</text>
</comment>
<dbReference type="EC" id="1.8.1.2" evidence="1"/>
<dbReference type="EMBL" id="CP000777">
    <property type="protein sequence ID" value="ABZ93662.1"/>
    <property type="molecule type" value="Genomic_DNA"/>
</dbReference>
<dbReference type="RefSeq" id="WP_012388178.1">
    <property type="nucleotide sequence ID" value="NC_010842.1"/>
</dbReference>
<dbReference type="SMR" id="B0SF75"/>
<dbReference type="KEGG" id="lbf:LBF_1138"/>
<dbReference type="HOGENOM" id="CLU_001975_3_2_12"/>
<dbReference type="UniPathway" id="UPA00140">
    <property type="reaction ID" value="UER00207"/>
</dbReference>
<dbReference type="GO" id="GO:0009337">
    <property type="term" value="C:sulfite reductase complex (NADPH)"/>
    <property type="evidence" value="ECO:0007669"/>
    <property type="project" value="InterPro"/>
</dbReference>
<dbReference type="GO" id="GO:0051539">
    <property type="term" value="F:4 iron, 4 sulfur cluster binding"/>
    <property type="evidence" value="ECO:0007669"/>
    <property type="project" value="UniProtKB-KW"/>
</dbReference>
<dbReference type="GO" id="GO:0020037">
    <property type="term" value="F:heme binding"/>
    <property type="evidence" value="ECO:0007669"/>
    <property type="project" value="InterPro"/>
</dbReference>
<dbReference type="GO" id="GO:0046872">
    <property type="term" value="F:metal ion binding"/>
    <property type="evidence" value="ECO:0007669"/>
    <property type="project" value="UniProtKB-KW"/>
</dbReference>
<dbReference type="GO" id="GO:0050661">
    <property type="term" value="F:NADP binding"/>
    <property type="evidence" value="ECO:0007669"/>
    <property type="project" value="InterPro"/>
</dbReference>
<dbReference type="GO" id="GO:0050311">
    <property type="term" value="F:sulfite reductase (ferredoxin) activity"/>
    <property type="evidence" value="ECO:0007669"/>
    <property type="project" value="TreeGrafter"/>
</dbReference>
<dbReference type="GO" id="GO:0004783">
    <property type="term" value="F:sulfite reductase (NADPH) activity"/>
    <property type="evidence" value="ECO:0007669"/>
    <property type="project" value="UniProtKB-UniRule"/>
</dbReference>
<dbReference type="GO" id="GO:0019344">
    <property type="term" value="P:cysteine biosynthetic process"/>
    <property type="evidence" value="ECO:0007669"/>
    <property type="project" value="UniProtKB-KW"/>
</dbReference>
<dbReference type="GO" id="GO:0070814">
    <property type="term" value="P:hydrogen sulfide biosynthetic process"/>
    <property type="evidence" value="ECO:0007669"/>
    <property type="project" value="UniProtKB-UniRule"/>
</dbReference>
<dbReference type="GO" id="GO:0000103">
    <property type="term" value="P:sulfate assimilation"/>
    <property type="evidence" value="ECO:0007669"/>
    <property type="project" value="UniProtKB-UniRule"/>
</dbReference>
<dbReference type="FunFam" id="3.30.413.10:FF:000003">
    <property type="entry name" value="Sulfite reductase [NADPH] hemoprotein beta-component"/>
    <property type="match status" value="1"/>
</dbReference>
<dbReference type="Gene3D" id="3.30.413.10">
    <property type="entry name" value="Sulfite Reductase Hemoprotein, domain 1"/>
    <property type="match status" value="2"/>
</dbReference>
<dbReference type="HAMAP" id="MF_01540">
    <property type="entry name" value="CysI"/>
    <property type="match status" value="1"/>
</dbReference>
<dbReference type="InterPro" id="IPR011786">
    <property type="entry name" value="CysI"/>
</dbReference>
<dbReference type="InterPro" id="IPR005117">
    <property type="entry name" value="NiRdtase/SiRdtase_haem-b_fer"/>
</dbReference>
<dbReference type="InterPro" id="IPR036136">
    <property type="entry name" value="Nit/Sulf_reduc_fer-like_dom_sf"/>
</dbReference>
<dbReference type="InterPro" id="IPR006067">
    <property type="entry name" value="NO2/SO3_Rdtase_4Fe4S_dom"/>
</dbReference>
<dbReference type="InterPro" id="IPR045169">
    <property type="entry name" value="NO2/SO3_Rdtase_4Fe4S_prot"/>
</dbReference>
<dbReference type="InterPro" id="IPR045854">
    <property type="entry name" value="NO2/SO3_Rdtase_4Fe4S_sf"/>
</dbReference>
<dbReference type="InterPro" id="IPR006066">
    <property type="entry name" value="NO2/SO3_Rdtase_FeS/sirohaem_BS"/>
</dbReference>
<dbReference type="NCBIfam" id="NF010029">
    <property type="entry name" value="PRK13504.1"/>
    <property type="match status" value="1"/>
</dbReference>
<dbReference type="PANTHER" id="PTHR11493:SF47">
    <property type="entry name" value="SULFITE REDUCTASE [NADPH] SUBUNIT BETA"/>
    <property type="match status" value="1"/>
</dbReference>
<dbReference type="PANTHER" id="PTHR11493">
    <property type="entry name" value="SULFITE REDUCTASE [NADPH] SUBUNIT BETA-RELATED"/>
    <property type="match status" value="1"/>
</dbReference>
<dbReference type="Pfam" id="PF01077">
    <property type="entry name" value="NIR_SIR"/>
    <property type="match status" value="1"/>
</dbReference>
<dbReference type="Pfam" id="PF03460">
    <property type="entry name" value="NIR_SIR_ferr"/>
    <property type="match status" value="2"/>
</dbReference>
<dbReference type="PRINTS" id="PR00397">
    <property type="entry name" value="SIROHAEM"/>
</dbReference>
<dbReference type="SUPFAM" id="SSF56014">
    <property type="entry name" value="Nitrite and sulphite reductase 4Fe-4S domain-like"/>
    <property type="match status" value="2"/>
</dbReference>
<dbReference type="SUPFAM" id="SSF55124">
    <property type="entry name" value="Nitrite/Sulfite reductase N-terminal domain-like"/>
    <property type="match status" value="2"/>
</dbReference>
<dbReference type="PROSITE" id="PS00365">
    <property type="entry name" value="NIR_SIR"/>
    <property type="match status" value="1"/>
</dbReference>
<protein>
    <recommendedName>
        <fullName evidence="1">Sulfite reductase [NADPH] hemoprotein beta-component</fullName>
        <shortName evidence="1">SiR-HP</shortName>
        <shortName evidence="1">SiRHP</shortName>
        <ecNumber evidence="1">1.8.1.2</ecNumber>
    </recommendedName>
</protein>
<keyword id="KW-0004">4Fe-4S</keyword>
<keyword id="KW-0028">Amino-acid biosynthesis</keyword>
<keyword id="KW-0198">Cysteine biosynthesis</keyword>
<keyword id="KW-0349">Heme</keyword>
<keyword id="KW-0408">Iron</keyword>
<keyword id="KW-0411">Iron-sulfur</keyword>
<keyword id="KW-0479">Metal-binding</keyword>
<keyword id="KW-0521">NADP</keyword>
<keyword id="KW-0560">Oxidoreductase</keyword>
<reference key="1">
    <citation type="journal article" date="2008" name="PLoS ONE">
        <title>Genome sequence of the saprophyte Leptospira biflexa provides insights into the evolution of Leptospira and the pathogenesis of leptospirosis.</title>
        <authorList>
            <person name="Picardeau M."/>
            <person name="Bulach D.M."/>
            <person name="Bouchier C."/>
            <person name="Zuerner R.L."/>
            <person name="Zidane N."/>
            <person name="Wilson P.J."/>
            <person name="Creno S."/>
            <person name="Kuczek E.S."/>
            <person name="Bommezzadri S."/>
            <person name="Davis J.C."/>
            <person name="McGrath A."/>
            <person name="Johnson M.J."/>
            <person name="Boursaux-Eude C."/>
            <person name="Seemann T."/>
            <person name="Rouy Z."/>
            <person name="Coppel R.L."/>
            <person name="Rood J.I."/>
            <person name="Lajus A."/>
            <person name="Davies J.K."/>
            <person name="Medigue C."/>
            <person name="Adler B."/>
        </authorList>
    </citation>
    <scope>NUCLEOTIDE SEQUENCE [LARGE SCALE GENOMIC DNA]</scope>
    <source>
        <strain>Patoc 1 / Ames</strain>
    </source>
</reference>
<organism>
    <name type="scientific">Leptospira biflexa serovar Patoc (strain Patoc 1 / Ames)</name>
    <dbReference type="NCBI Taxonomy" id="355278"/>
    <lineage>
        <taxon>Bacteria</taxon>
        <taxon>Pseudomonadati</taxon>
        <taxon>Spirochaetota</taxon>
        <taxon>Spirochaetia</taxon>
        <taxon>Leptospirales</taxon>
        <taxon>Leptospiraceae</taxon>
        <taxon>Leptospira</taxon>
    </lineage>
</organism>
<accession>B0SF75</accession>
<gene>
    <name evidence="1" type="primary">cysI</name>
    <name type="ordered locus">LBF_1138</name>
</gene>
<evidence type="ECO:0000255" key="1">
    <source>
        <dbReference type="HAMAP-Rule" id="MF_01540"/>
    </source>
</evidence>
<feature type="chain" id="PRO_0000388490" description="Sulfite reductase [NADPH] hemoprotein beta-component">
    <location>
        <begin position="1"/>
        <end position="555"/>
    </location>
</feature>
<feature type="binding site" evidence="1">
    <location>
        <position position="430"/>
    </location>
    <ligand>
        <name>[4Fe-4S] cluster</name>
        <dbReference type="ChEBI" id="CHEBI:49883"/>
    </ligand>
</feature>
<feature type="binding site" evidence="1">
    <location>
        <position position="436"/>
    </location>
    <ligand>
        <name>[4Fe-4S] cluster</name>
        <dbReference type="ChEBI" id="CHEBI:49883"/>
    </ligand>
</feature>
<feature type="binding site" evidence="1">
    <location>
        <position position="475"/>
    </location>
    <ligand>
        <name>[4Fe-4S] cluster</name>
        <dbReference type="ChEBI" id="CHEBI:49883"/>
    </ligand>
</feature>
<feature type="binding site" evidence="1">
    <location>
        <position position="479"/>
    </location>
    <ligand>
        <name>[4Fe-4S] cluster</name>
        <dbReference type="ChEBI" id="CHEBI:49883"/>
    </ligand>
</feature>
<feature type="binding site" description="axial binding residue" evidence="1">
    <location>
        <position position="479"/>
    </location>
    <ligand>
        <name>siroheme</name>
        <dbReference type="ChEBI" id="CHEBI:60052"/>
    </ligand>
    <ligandPart>
        <name>Fe</name>
        <dbReference type="ChEBI" id="CHEBI:18248"/>
    </ligandPart>
</feature>
<name>CYSI_LEPBA</name>
<sequence>MAETKKETLAEKVKRLSRGLRGSLVDSLKDEHTGSLRSDDQLLLKFHGMYQQDDRDRRDERALKKLERLYSFMIRLRIPGGMIGPVHWEALHNVAGENSTGTIKITTRQTVQLHGILKSKIKPTIKAFDSVFLDSIAACGDVNRNVTCTSNPAASPLHKEVFGYAGEISRSLLPKTRAYYEIWLDENLLAEKEEPEDPLYKDVYLPRKFKIAIAIPPYNDVDLFTNDIGLIAIIENGQLLGFNVAVGGGLGTTHGNPDTYPRVGTVFGFIPKKDILRVVYEIVTVQRDFGNREDRKLSRLKYTLDRLGVEFYKREVEKRAGISFESAKDFQFTTRSDDFGWKQDAAGNWHYTVFVENGRVCDEHGYNLKTALLEVSKTRRATFRFTCNQNLILSDIFPKDKDLIESILVKFGVHRKTAEVSPIRKNSIACVALNTCSLALAEAQRYLPSLIDKIEPILSKHGLSEEPISIRMTGCPNGCARPYISEIGLVGTSYGKYNLHVGADAEGYRLNKKYKEDLDESAILQELDGLFGKFSKDRKGKESFGDYINRIGILK</sequence>
<proteinExistence type="inferred from homology"/>